<dbReference type="EC" id="1.2.1.19" evidence="1"/>
<dbReference type="EC" id="1.2.1.-" evidence="1"/>
<dbReference type="EMBL" id="CP000468">
    <property type="protein sequence ID" value="ABJ00886.1"/>
    <property type="molecule type" value="Genomic_DNA"/>
</dbReference>
<dbReference type="RefSeq" id="WP_001163909.1">
    <property type="nucleotide sequence ID" value="NZ_CADILS010000032.1"/>
</dbReference>
<dbReference type="SMR" id="A1AB46"/>
<dbReference type="KEGG" id="ecv:APECO1_586"/>
<dbReference type="HOGENOM" id="CLU_005391_1_0_6"/>
<dbReference type="UniPathway" id="UPA00188">
    <property type="reaction ID" value="UER00292"/>
</dbReference>
<dbReference type="Proteomes" id="UP000008216">
    <property type="component" value="Chromosome"/>
</dbReference>
<dbReference type="GO" id="GO:0019145">
    <property type="term" value="F:aminobutyraldehyde dehydrogenase (NAD+) activity"/>
    <property type="evidence" value="ECO:0007669"/>
    <property type="project" value="UniProtKB-UniRule"/>
</dbReference>
<dbReference type="GO" id="GO:0051287">
    <property type="term" value="F:NAD binding"/>
    <property type="evidence" value="ECO:0007669"/>
    <property type="project" value="UniProtKB-UniRule"/>
</dbReference>
<dbReference type="GO" id="GO:0019477">
    <property type="term" value="P:L-lysine catabolic process"/>
    <property type="evidence" value="ECO:0007669"/>
    <property type="project" value="UniProtKB-UniRule"/>
</dbReference>
<dbReference type="GO" id="GO:0009447">
    <property type="term" value="P:putrescine catabolic process"/>
    <property type="evidence" value="ECO:0007669"/>
    <property type="project" value="UniProtKB-UniRule"/>
</dbReference>
<dbReference type="CDD" id="cd07092">
    <property type="entry name" value="ALDH_ABALDH-YdcW"/>
    <property type="match status" value="1"/>
</dbReference>
<dbReference type="FunFam" id="3.40.605.10:FF:000001">
    <property type="entry name" value="Aldehyde dehydrogenase 1"/>
    <property type="match status" value="1"/>
</dbReference>
<dbReference type="FunFam" id="3.40.309.10:FF:000010">
    <property type="entry name" value="Gamma-aminobutyraldehyde dehydrogenase"/>
    <property type="match status" value="1"/>
</dbReference>
<dbReference type="Gene3D" id="3.40.605.10">
    <property type="entry name" value="Aldehyde Dehydrogenase, Chain A, domain 1"/>
    <property type="match status" value="1"/>
</dbReference>
<dbReference type="Gene3D" id="3.40.309.10">
    <property type="entry name" value="Aldehyde Dehydrogenase, Chain A, domain 2"/>
    <property type="match status" value="1"/>
</dbReference>
<dbReference type="HAMAP" id="MF_01275">
    <property type="entry name" value="Aldedh_Prr"/>
    <property type="match status" value="1"/>
</dbReference>
<dbReference type="InterPro" id="IPR016161">
    <property type="entry name" value="Ald_DH/histidinol_DH"/>
</dbReference>
<dbReference type="InterPro" id="IPR016163">
    <property type="entry name" value="Ald_DH_C"/>
</dbReference>
<dbReference type="InterPro" id="IPR029510">
    <property type="entry name" value="Ald_DH_CS_GLU"/>
</dbReference>
<dbReference type="InterPro" id="IPR016162">
    <property type="entry name" value="Ald_DH_N"/>
</dbReference>
<dbReference type="InterPro" id="IPR015590">
    <property type="entry name" value="Aldehyde_DH_dom"/>
</dbReference>
<dbReference type="InterPro" id="IPR015657">
    <property type="entry name" value="Aminobutyraldehyde_DH"/>
</dbReference>
<dbReference type="InterPro" id="IPR017749">
    <property type="entry name" value="PatD"/>
</dbReference>
<dbReference type="NCBIfam" id="TIGR03374">
    <property type="entry name" value="ABALDH"/>
    <property type="match status" value="1"/>
</dbReference>
<dbReference type="NCBIfam" id="NF010000">
    <property type="entry name" value="PRK13473.1"/>
    <property type="match status" value="1"/>
</dbReference>
<dbReference type="PANTHER" id="PTHR11699">
    <property type="entry name" value="ALDEHYDE DEHYDROGENASE-RELATED"/>
    <property type="match status" value="1"/>
</dbReference>
<dbReference type="Pfam" id="PF00171">
    <property type="entry name" value="Aldedh"/>
    <property type="match status" value="1"/>
</dbReference>
<dbReference type="SUPFAM" id="SSF53720">
    <property type="entry name" value="ALDH-like"/>
    <property type="match status" value="1"/>
</dbReference>
<dbReference type="PROSITE" id="PS00687">
    <property type="entry name" value="ALDEHYDE_DEHYDR_GLU"/>
    <property type="match status" value="1"/>
</dbReference>
<protein>
    <recommendedName>
        <fullName evidence="1">Gamma-aminobutyraldehyde dehydrogenase</fullName>
        <shortName evidence="1">ABALDH</shortName>
        <ecNumber evidence="1">1.2.1.19</ecNumber>
    </recommendedName>
    <alternativeName>
        <fullName evidence="1">1-pyrroline dehydrogenase</fullName>
    </alternativeName>
    <alternativeName>
        <fullName evidence="1">4-aminobutanal dehydrogenase</fullName>
    </alternativeName>
    <alternativeName>
        <fullName evidence="1">5-aminopentanal dehydrogenase</fullName>
        <ecNumber evidence="1">1.2.1.-</ecNumber>
    </alternativeName>
</protein>
<comment type="function">
    <text evidence="1">Catalyzes the oxidation 4-aminobutanal (gamma-aminobutyraldehyde) to 4-aminobutanoate (gamma-aminobutyrate or GABA). This is the second step in one of two pathways for putrescine degradation, where putrescine is converted into 4-aminobutanoate via 4-aminobutanal. Also functions as a 5-aminopentanal dehydrogenase in a a L-lysine degradation pathway to succinate that proceeds via cadaverine, glutarate and L-2-hydroxyglutarate.</text>
</comment>
<comment type="catalytic activity">
    <reaction evidence="1">
        <text>4-aminobutanal + NAD(+) + H2O = 4-aminobutanoate + NADH + 2 H(+)</text>
        <dbReference type="Rhea" id="RHEA:19105"/>
        <dbReference type="ChEBI" id="CHEBI:15377"/>
        <dbReference type="ChEBI" id="CHEBI:15378"/>
        <dbReference type="ChEBI" id="CHEBI:57540"/>
        <dbReference type="ChEBI" id="CHEBI:57945"/>
        <dbReference type="ChEBI" id="CHEBI:58264"/>
        <dbReference type="ChEBI" id="CHEBI:59888"/>
        <dbReference type="EC" id="1.2.1.19"/>
    </reaction>
    <physiologicalReaction direction="left-to-right" evidence="1">
        <dbReference type="Rhea" id="RHEA:19106"/>
    </physiologicalReaction>
</comment>
<comment type="catalytic activity">
    <reaction evidence="1">
        <text>5-aminopentanal + NAD(+) + H2O = 5-aminopentanoate + NADH + 2 H(+)</text>
        <dbReference type="Rhea" id="RHEA:61632"/>
        <dbReference type="ChEBI" id="CHEBI:15377"/>
        <dbReference type="ChEBI" id="CHEBI:15378"/>
        <dbReference type="ChEBI" id="CHEBI:57540"/>
        <dbReference type="ChEBI" id="CHEBI:57945"/>
        <dbReference type="ChEBI" id="CHEBI:144896"/>
        <dbReference type="ChEBI" id="CHEBI:356010"/>
    </reaction>
    <physiologicalReaction direction="left-to-right" evidence="1">
        <dbReference type="Rhea" id="RHEA:61633"/>
    </physiologicalReaction>
</comment>
<comment type="pathway">
    <text evidence="1">Amine and polyamine degradation; putrescine degradation; 4-aminobutanoate from 4-aminobutanal: step 1/1.</text>
</comment>
<comment type="pathway">
    <text evidence="1">Amino-acid degradation.</text>
</comment>
<comment type="subunit">
    <text evidence="1">Homotetramer.</text>
</comment>
<comment type="miscellaneous">
    <text evidence="1">4-aminobutanal can spontaneously cyclize to 1-pyrroline, and 5-aminopentanal to 1-piperideine.</text>
</comment>
<comment type="similarity">
    <text evidence="1">Belongs to the aldehyde dehydrogenase family. Gamma-aminobutyraldehyde dehydrogenase subfamily.</text>
</comment>
<name>ABDH_ECOK1</name>
<gene>
    <name evidence="1" type="primary">patD</name>
    <name type="ordered locus">Ecok1_13920</name>
    <name type="ORF">APECO1_586</name>
</gene>
<proteinExistence type="inferred from homology"/>
<evidence type="ECO:0000255" key="1">
    <source>
        <dbReference type="HAMAP-Rule" id="MF_01275"/>
    </source>
</evidence>
<keyword id="KW-0520">NAD</keyword>
<keyword id="KW-0560">Oxidoreductase</keyword>
<keyword id="KW-1185">Reference proteome</keyword>
<reference key="1">
    <citation type="journal article" date="2007" name="J. Bacteriol.">
        <title>The genome sequence of avian pathogenic Escherichia coli strain O1:K1:H7 shares strong similarities with human extraintestinal pathogenic E. coli genomes.</title>
        <authorList>
            <person name="Johnson T.J."/>
            <person name="Kariyawasam S."/>
            <person name="Wannemuehler Y."/>
            <person name="Mangiamele P."/>
            <person name="Johnson S.J."/>
            <person name="Doetkott C."/>
            <person name="Skyberg J.A."/>
            <person name="Lynne A.M."/>
            <person name="Johnson J.R."/>
            <person name="Nolan L.K."/>
        </authorList>
    </citation>
    <scope>NUCLEOTIDE SEQUENCE [LARGE SCALE GENOMIC DNA]</scope>
</reference>
<organism>
    <name type="scientific">Escherichia coli O1:K1 / APEC</name>
    <dbReference type="NCBI Taxonomy" id="405955"/>
    <lineage>
        <taxon>Bacteria</taxon>
        <taxon>Pseudomonadati</taxon>
        <taxon>Pseudomonadota</taxon>
        <taxon>Gammaproteobacteria</taxon>
        <taxon>Enterobacterales</taxon>
        <taxon>Enterobacteriaceae</taxon>
        <taxon>Escherichia</taxon>
    </lineage>
</organism>
<sequence length="474" mass="50859">MQHKLLINGELVSGEGEKQPVYNPATGDVLLEIAEASAEQVNAAVRAADAAFAEWGQTTPKARAECLLKLADVIEENGQVFAELESRNCGKPLHSAFNDEIPAIVDVFRFFAGAARCLNGLAAGEYLEGHTSMIRRDPLGVVASIAPWNYPLMMAAWKLAPALAAGNCVVLKPSEITPLTALKLAELAKDIFPAGVINVLFGRGKTVGDPLTGHPKVRMVSLTGSIATGEHIISHTAPSIKRTHMELGGKAPVIVFDDADIEAVVEGVRTFGYYNAGQDCTAACRIYAQKGIYDTLVEKLGAAVATLKSGSPDDESTELGPLSSLAHLERVSKAVEEAKATGHIKVITGGEKRKGNGYYYAPTLLAGALQDDAIVQKEVFGPVVSVTLFDNEEQVVNWANDSQYGLASSVWTKDVGRAHRVSARLQYGCTWVNTHFMLVSEMPHGGQKLSGYGKDMSLYGLEDYTVVRHVMVKH</sequence>
<feature type="chain" id="PRO_1000067393" description="Gamma-aminobutyraldehyde dehydrogenase">
    <location>
        <begin position="1"/>
        <end position="474"/>
    </location>
</feature>
<feature type="active site" evidence="1">
    <location>
        <position position="246"/>
    </location>
</feature>
<feature type="active site" description="Nucleophile" evidence="1">
    <location>
        <position position="280"/>
    </location>
</feature>
<feature type="binding site" evidence="1">
    <location>
        <begin position="146"/>
        <end position="148"/>
    </location>
    <ligand>
        <name>NAD(+)</name>
        <dbReference type="ChEBI" id="CHEBI:57540"/>
    </ligand>
</feature>
<feature type="binding site" evidence="1">
    <location>
        <begin position="172"/>
        <end position="175"/>
    </location>
    <ligand>
        <name>NAD(+)</name>
        <dbReference type="ChEBI" id="CHEBI:57540"/>
    </ligand>
</feature>
<feature type="binding site" evidence="1">
    <location>
        <position position="209"/>
    </location>
    <ligand>
        <name>NAD(+)</name>
        <dbReference type="ChEBI" id="CHEBI:57540"/>
    </ligand>
</feature>
<feature type="binding site" evidence="1">
    <location>
        <begin position="225"/>
        <end position="228"/>
    </location>
    <ligand>
        <name>NAD(+)</name>
        <dbReference type="ChEBI" id="CHEBI:57540"/>
    </ligand>
</feature>
<feature type="binding site" evidence="1">
    <location>
        <position position="280"/>
    </location>
    <ligand>
        <name>NAD(+)</name>
        <dbReference type="ChEBI" id="CHEBI:57540"/>
    </ligand>
</feature>
<accession>A1AB46</accession>